<organism>
    <name type="scientific">Clostridium perfringens (strain ATCC 13124 / DSM 756 / JCM 1290 / NCIMB 6125 / NCTC 8237 / Type A)</name>
    <dbReference type="NCBI Taxonomy" id="195103"/>
    <lineage>
        <taxon>Bacteria</taxon>
        <taxon>Bacillati</taxon>
        <taxon>Bacillota</taxon>
        <taxon>Clostridia</taxon>
        <taxon>Eubacteriales</taxon>
        <taxon>Clostridiaceae</taxon>
        <taxon>Clostridium</taxon>
    </lineage>
</organism>
<reference key="1">
    <citation type="journal article" date="2006" name="Genome Res.">
        <title>Skewed genomic variability in strains of the toxigenic bacterial pathogen, Clostridium perfringens.</title>
        <authorList>
            <person name="Myers G.S.A."/>
            <person name="Rasko D.A."/>
            <person name="Cheung J.K."/>
            <person name="Ravel J."/>
            <person name="Seshadri R."/>
            <person name="DeBoy R.T."/>
            <person name="Ren Q."/>
            <person name="Varga J."/>
            <person name="Awad M.M."/>
            <person name="Brinkac L.M."/>
            <person name="Daugherty S.C."/>
            <person name="Haft D.H."/>
            <person name="Dodson R.J."/>
            <person name="Madupu R."/>
            <person name="Nelson W.C."/>
            <person name="Rosovitz M.J."/>
            <person name="Sullivan S.A."/>
            <person name="Khouri H."/>
            <person name="Dimitrov G.I."/>
            <person name="Watkins K.L."/>
            <person name="Mulligan S."/>
            <person name="Benton J."/>
            <person name="Radune D."/>
            <person name="Fisher D.J."/>
            <person name="Atkins H.S."/>
            <person name="Hiscox T."/>
            <person name="Jost B.H."/>
            <person name="Billington S.J."/>
            <person name="Songer J.G."/>
            <person name="McClane B.A."/>
            <person name="Titball R.W."/>
            <person name="Rood J.I."/>
            <person name="Melville S.B."/>
            <person name="Paulsen I.T."/>
        </authorList>
    </citation>
    <scope>NUCLEOTIDE SEQUENCE [LARGE SCALE GENOMIC DNA]</scope>
    <source>
        <strain>ATCC 13124 / DSM 756 / JCM 1290 / NCIMB 6125 / NCTC 8237 / S 107 / Type A</strain>
    </source>
</reference>
<comment type="similarity">
    <text evidence="2">Belongs to the UPF0758 family.</text>
</comment>
<protein>
    <recommendedName>
        <fullName>UPF0758 protein CPF_2399</fullName>
    </recommendedName>
</protein>
<evidence type="ECO:0000255" key="1">
    <source>
        <dbReference type="PROSITE-ProRule" id="PRU01182"/>
    </source>
</evidence>
<evidence type="ECO:0000305" key="2"/>
<dbReference type="EMBL" id="CP000246">
    <property type="protein sequence ID" value="ABG83693.1"/>
    <property type="molecule type" value="Genomic_DNA"/>
</dbReference>
<dbReference type="SMR" id="Q0TNG8"/>
<dbReference type="STRING" id="195103.CPF_2399"/>
<dbReference type="PaxDb" id="195103-CPF_2399"/>
<dbReference type="KEGG" id="cpf:CPF_2399"/>
<dbReference type="eggNOG" id="COG2003">
    <property type="taxonomic scope" value="Bacteria"/>
</dbReference>
<dbReference type="HOGENOM" id="CLU_073529_0_2_9"/>
<dbReference type="Proteomes" id="UP000001823">
    <property type="component" value="Chromosome"/>
</dbReference>
<dbReference type="GO" id="GO:0046872">
    <property type="term" value="F:metal ion binding"/>
    <property type="evidence" value="ECO:0007669"/>
    <property type="project" value="UniProtKB-KW"/>
</dbReference>
<dbReference type="GO" id="GO:0008237">
    <property type="term" value="F:metallopeptidase activity"/>
    <property type="evidence" value="ECO:0007669"/>
    <property type="project" value="UniProtKB-KW"/>
</dbReference>
<dbReference type="GO" id="GO:0006508">
    <property type="term" value="P:proteolysis"/>
    <property type="evidence" value="ECO:0007669"/>
    <property type="project" value="UniProtKB-KW"/>
</dbReference>
<dbReference type="CDD" id="cd08071">
    <property type="entry name" value="MPN_DUF2466"/>
    <property type="match status" value="1"/>
</dbReference>
<dbReference type="Gene3D" id="3.40.140.10">
    <property type="entry name" value="Cytidine Deaminase, domain 2"/>
    <property type="match status" value="1"/>
</dbReference>
<dbReference type="InterPro" id="IPR037518">
    <property type="entry name" value="MPN"/>
</dbReference>
<dbReference type="InterPro" id="IPR025657">
    <property type="entry name" value="RadC_JAB"/>
</dbReference>
<dbReference type="InterPro" id="IPR010994">
    <property type="entry name" value="RuvA_2-like"/>
</dbReference>
<dbReference type="InterPro" id="IPR001405">
    <property type="entry name" value="UPF0758"/>
</dbReference>
<dbReference type="InterPro" id="IPR020891">
    <property type="entry name" value="UPF0758_CS"/>
</dbReference>
<dbReference type="InterPro" id="IPR046778">
    <property type="entry name" value="UPF0758_N"/>
</dbReference>
<dbReference type="NCBIfam" id="NF000642">
    <property type="entry name" value="PRK00024.1"/>
    <property type="match status" value="1"/>
</dbReference>
<dbReference type="NCBIfam" id="TIGR00608">
    <property type="entry name" value="radc"/>
    <property type="match status" value="1"/>
</dbReference>
<dbReference type="PANTHER" id="PTHR30471">
    <property type="entry name" value="DNA REPAIR PROTEIN RADC"/>
    <property type="match status" value="1"/>
</dbReference>
<dbReference type="PANTHER" id="PTHR30471:SF3">
    <property type="entry name" value="UPF0758 PROTEIN YEES-RELATED"/>
    <property type="match status" value="1"/>
</dbReference>
<dbReference type="Pfam" id="PF04002">
    <property type="entry name" value="RadC"/>
    <property type="match status" value="1"/>
</dbReference>
<dbReference type="Pfam" id="PF20582">
    <property type="entry name" value="UPF0758_N"/>
    <property type="match status" value="1"/>
</dbReference>
<dbReference type="SUPFAM" id="SSF47781">
    <property type="entry name" value="RuvA domain 2-like"/>
    <property type="match status" value="1"/>
</dbReference>
<dbReference type="PROSITE" id="PS50249">
    <property type="entry name" value="MPN"/>
    <property type="match status" value="1"/>
</dbReference>
<dbReference type="PROSITE" id="PS01302">
    <property type="entry name" value="UPF0758"/>
    <property type="match status" value="1"/>
</dbReference>
<sequence length="227" mass="25521">MSKNIRINEIPSGERPREKLLFYGAQFLSNEELLAIILRTGNKDSNVVELSYRIIHSVGGLNGLFKASAKELMEVKGVKEAKATQILAMCELYKRFKVSELAQVKISKPSDVAKLVLDELRMLRQEVLILINLDTKNKVISKKEIFKGGLNSSLVHPREIFREAVKDSAASIIICHNHPSGDPTPSRDDINITTRLKECGKMMGIELLDHLIIGDNRFISLKEKDIL</sequence>
<name>Y2399_CLOP1</name>
<feature type="chain" id="PRO_1000001654" description="UPF0758 protein CPF_2399">
    <location>
        <begin position="1"/>
        <end position="227"/>
    </location>
</feature>
<feature type="domain" description="MPN" evidence="1">
    <location>
        <begin position="105"/>
        <end position="227"/>
    </location>
</feature>
<feature type="short sequence motif" description="JAMM motif" evidence="1">
    <location>
        <begin position="176"/>
        <end position="189"/>
    </location>
</feature>
<feature type="binding site" evidence="1">
    <location>
        <position position="176"/>
    </location>
    <ligand>
        <name>Zn(2+)</name>
        <dbReference type="ChEBI" id="CHEBI:29105"/>
        <note>catalytic</note>
    </ligand>
</feature>
<feature type="binding site" evidence="1">
    <location>
        <position position="178"/>
    </location>
    <ligand>
        <name>Zn(2+)</name>
        <dbReference type="ChEBI" id="CHEBI:29105"/>
        <note>catalytic</note>
    </ligand>
</feature>
<feature type="binding site" evidence="1">
    <location>
        <position position="189"/>
    </location>
    <ligand>
        <name>Zn(2+)</name>
        <dbReference type="ChEBI" id="CHEBI:29105"/>
        <note>catalytic</note>
    </ligand>
</feature>
<keyword id="KW-0378">Hydrolase</keyword>
<keyword id="KW-0479">Metal-binding</keyword>
<keyword id="KW-0482">Metalloprotease</keyword>
<keyword id="KW-0645">Protease</keyword>
<keyword id="KW-0862">Zinc</keyword>
<accession>Q0TNG8</accession>
<gene>
    <name type="ordered locus">CPF_2399</name>
</gene>
<proteinExistence type="inferred from homology"/>